<gene>
    <name evidence="3" type="primary">PUP14</name>
    <name evidence="5" type="ordered locus">At1g19770</name>
    <name type="ORF">F14P1.13</name>
    <name evidence="6" type="ORF">F6F9.18</name>
</gene>
<organism>
    <name type="scientific">Arabidopsis thaliana</name>
    <name type="common">Mouse-ear cress</name>
    <dbReference type="NCBI Taxonomy" id="3702"/>
    <lineage>
        <taxon>Eukaryota</taxon>
        <taxon>Viridiplantae</taxon>
        <taxon>Streptophyta</taxon>
        <taxon>Embryophyta</taxon>
        <taxon>Tracheophyta</taxon>
        <taxon>Spermatophyta</taxon>
        <taxon>Magnoliopsida</taxon>
        <taxon>eudicotyledons</taxon>
        <taxon>Gunneridae</taxon>
        <taxon>Pentapetalae</taxon>
        <taxon>rosids</taxon>
        <taxon>malvids</taxon>
        <taxon>Brassicales</taxon>
        <taxon>Brassicaceae</taxon>
        <taxon>Camelineae</taxon>
        <taxon>Arabidopsis</taxon>
    </lineage>
</organism>
<dbReference type="EMBL" id="AC007797">
    <property type="protein sequence ID" value="AAG12553.1"/>
    <property type="molecule type" value="Genomic_DNA"/>
</dbReference>
<dbReference type="EMBL" id="CP002684">
    <property type="protein sequence ID" value="AEE29895.1"/>
    <property type="molecule type" value="Genomic_DNA"/>
</dbReference>
<dbReference type="EMBL" id="BX814406">
    <property type="status" value="NOT_ANNOTATED_CDS"/>
    <property type="molecule type" value="mRNA"/>
</dbReference>
<dbReference type="PIR" id="G86330">
    <property type="entry name" value="G86330"/>
</dbReference>
<dbReference type="RefSeq" id="NP_173407.1">
    <property type="nucleotide sequence ID" value="NM_101833.4"/>
</dbReference>
<dbReference type="BioGRID" id="23804">
    <property type="interactions" value="11"/>
</dbReference>
<dbReference type="FunCoup" id="Q9FXH5">
    <property type="interactions" value="2"/>
</dbReference>
<dbReference type="IntAct" id="Q9FXH5">
    <property type="interactions" value="9"/>
</dbReference>
<dbReference type="STRING" id="3702.Q9FXH5"/>
<dbReference type="iPTMnet" id="Q9FXH5"/>
<dbReference type="PaxDb" id="3702-AT1G19770.1"/>
<dbReference type="ProteomicsDB" id="226364"/>
<dbReference type="EnsemblPlants" id="AT1G19770.1">
    <property type="protein sequence ID" value="AT1G19770.1"/>
    <property type="gene ID" value="AT1G19770"/>
</dbReference>
<dbReference type="GeneID" id="838565"/>
<dbReference type="Gramene" id="AT1G19770.1">
    <property type="protein sequence ID" value="AT1G19770.1"/>
    <property type="gene ID" value="AT1G19770"/>
</dbReference>
<dbReference type="KEGG" id="ath:AT1G19770"/>
<dbReference type="Araport" id="AT1G19770"/>
<dbReference type="TAIR" id="AT1G19770">
    <property type="gene designation" value="PUP14"/>
</dbReference>
<dbReference type="eggNOG" id="ENOG502QVMQ">
    <property type="taxonomic scope" value="Eukaryota"/>
</dbReference>
<dbReference type="HOGENOM" id="CLU_043459_2_1_1"/>
<dbReference type="InParanoid" id="Q9FXH5"/>
<dbReference type="OMA" id="WPTITIS"/>
<dbReference type="PhylomeDB" id="Q9FXH5"/>
<dbReference type="PRO" id="PR:Q9FXH5"/>
<dbReference type="Proteomes" id="UP000006548">
    <property type="component" value="Chromosome 1"/>
</dbReference>
<dbReference type="ExpressionAtlas" id="Q9FXH5">
    <property type="expression patterns" value="baseline and differential"/>
</dbReference>
<dbReference type="GO" id="GO:0016020">
    <property type="term" value="C:membrane"/>
    <property type="evidence" value="ECO:0000304"/>
    <property type="project" value="TAIR"/>
</dbReference>
<dbReference type="GO" id="GO:0005886">
    <property type="term" value="C:plasma membrane"/>
    <property type="evidence" value="ECO:0007669"/>
    <property type="project" value="UniProtKB-SubCell"/>
</dbReference>
<dbReference type="GO" id="GO:0005345">
    <property type="term" value="F:purine nucleobase transmembrane transporter activity"/>
    <property type="evidence" value="ECO:0000304"/>
    <property type="project" value="TAIR"/>
</dbReference>
<dbReference type="GO" id="GO:0015211">
    <property type="term" value="F:purine nucleoside transmembrane transporter activity"/>
    <property type="evidence" value="ECO:0007669"/>
    <property type="project" value="InterPro"/>
</dbReference>
<dbReference type="GO" id="GO:0010184">
    <property type="term" value="P:cytokinin transport"/>
    <property type="evidence" value="ECO:0000314"/>
    <property type="project" value="TAIR"/>
</dbReference>
<dbReference type="GO" id="GO:0009736">
    <property type="term" value="P:cytokinin-activated signaling pathway"/>
    <property type="evidence" value="ECO:0007669"/>
    <property type="project" value="UniProtKB-KW"/>
</dbReference>
<dbReference type="GO" id="GO:0080037">
    <property type="term" value="P:negative regulation of cytokinin-activated signaling pathway"/>
    <property type="evidence" value="ECO:0000315"/>
    <property type="project" value="TAIR"/>
</dbReference>
<dbReference type="GO" id="GO:0006863">
    <property type="term" value="P:purine nucleobase transport"/>
    <property type="evidence" value="ECO:0000304"/>
    <property type="project" value="TAIR"/>
</dbReference>
<dbReference type="InterPro" id="IPR030182">
    <property type="entry name" value="PUP_plant"/>
</dbReference>
<dbReference type="PANTHER" id="PTHR31376">
    <property type="entry name" value="OS09G0467300 PROTEIN-RELATED"/>
    <property type="match status" value="1"/>
</dbReference>
<dbReference type="PANTHER" id="PTHR31376:SF62">
    <property type="entry name" value="PURINE PERMEASE 14-RELATED"/>
    <property type="match status" value="1"/>
</dbReference>
<dbReference type="Pfam" id="PF16913">
    <property type="entry name" value="PUNUT"/>
    <property type="match status" value="1"/>
</dbReference>
<comment type="function">
    <text evidence="2">Purine permease implicated in ATP-dependent cytokinin translocation that controls the spatiotemporal landscape of cytokinin signaling. Depletes ligands from the apoplast, which leads to a suppression of the cytokinin response.</text>
</comment>
<comment type="subcellular location">
    <subcellularLocation>
        <location evidence="2">Cell membrane</location>
        <topology evidence="4">Multi-pass membrane protein</topology>
    </subcellularLocation>
</comment>
<comment type="tissue specificity">
    <text evidence="2">Expressed in seedlings, leaves, embryos, ovules, seeds and the root and shoot meristems. In heart-stage embryos, detected in cells that failed to respond to cytokinins, including the prospective cotyledons.</text>
</comment>
<comment type="similarity">
    <text evidence="4">Belongs to the purine permeases (TC 2.A.7.14) family.</text>
</comment>
<name>PUP14_ARATH</name>
<sequence>MAQNQQPIFQTKPPEQFVQIPINIERDSSTTRMNQTGNTIRKPNHWPTITISIIFVIIGQSIAKLLENFYYDKTNRSEYNENRQNDGVWTQSLLQTVGFPLLLLPFLIFITKNKRNHHQQPPITSDSIHLKSLAVIYICIGIIMSVQGRLAAMGKLEIPFGVFTLIYTAQLFFTPIFAAFINKIKFNRWVVISVILAIITGALTLSSSFGGEPDEAEENYARGSWAALFAGICFALLLCNIQNVFDSYIFKRTESTNQKPSFASVFEVIIFSSLVATIISVVGLLIAGEQHDLKREMNGFSKGKGSYVMAMVGQAVSWQVYWVGIVGLVYSVSSVLSNVISVITWPIVSVLVVIFFNFMDDEFDAFKGVALVTAVLSAAAYFFRLHKDNRMAY</sequence>
<accession>Q9FXH5</accession>
<protein>
    <recommendedName>
        <fullName evidence="3">Purine permease 14</fullName>
        <shortName evidence="3">AtPUP14</shortName>
    </recommendedName>
</protein>
<feature type="initiator methionine" description="Removed" evidence="7">
    <location>
        <position position="1"/>
    </location>
</feature>
<feature type="chain" id="PRO_0000317401" description="Purine permease 14">
    <location>
        <begin position="2"/>
        <end position="393"/>
    </location>
</feature>
<feature type="transmembrane region" description="Helical" evidence="1">
    <location>
        <begin position="46"/>
        <end position="66"/>
    </location>
</feature>
<feature type="transmembrane region" description="Helical" evidence="1">
    <location>
        <begin position="90"/>
        <end position="110"/>
    </location>
</feature>
<feature type="transmembrane region" description="Helical" evidence="1">
    <location>
        <begin position="133"/>
        <end position="153"/>
    </location>
</feature>
<feature type="transmembrane region" description="Helical" evidence="1">
    <location>
        <begin position="161"/>
        <end position="181"/>
    </location>
</feature>
<feature type="transmembrane region" description="Helical" evidence="1">
    <location>
        <begin position="189"/>
        <end position="209"/>
    </location>
</feature>
<feature type="transmembrane region" description="Helical" evidence="1">
    <location>
        <begin position="225"/>
        <end position="245"/>
    </location>
</feature>
<feature type="transmembrane region" description="Helical" evidence="1">
    <location>
        <begin position="268"/>
        <end position="288"/>
    </location>
</feature>
<feature type="transmembrane region" description="Helical" evidence="1">
    <location>
        <begin position="308"/>
        <end position="328"/>
    </location>
</feature>
<feature type="transmembrane region" description="Helical" evidence="1">
    <location>
        <begin position="339"/>
        <end position="359"/>
    </location>
</feature>
<feature type="transmembrane region" description="Helical" evidence="1">
    <location>
        <begin position="363"/>
        <end position="383"/>
    </location>
</feature>
<feature type="modified residue" description="N-acetylalanine" evidence="7">
    <location>
        <position position="2"/>
    </location>
</feature>
<reference key="1">
    <citation type="journal article" date="2000" name="Nature">
        <title>Sequence and analysis of chromosome 1 of the plant Arabidopsis thaliana.</title>
        <authorList>
            <person name="Theologis A."/>
            <person name="Ecker J.R."/>
            <person name="Palm C.J."/>
            <person name="Federspiel N.A."/>
            <person name="Kaul S."/>
            <person name="White O."/>
            <person name="Alonso J."/>
            <person name="Altafi H."/>
            <person name="Araujo R."/>
            <person name="Bowman C.L."/>
            <person name="Brooks S.Y."/>
            <person name="Buehler E."/>
            <person name="Chan A."/>
            <person name="Chao Q."/>
            <person name="Chen H."/>
            <person name="Cheuk R.F."/>
            <person name="Chin C.W."/>
            <person name="Chung M.K."/>
            <person name="Conn L."/>
            <person name="Conway A.B."/>
            <person name="Conway A.R."/>
            <person name="Creasy T.H."/>
            <person name="Dewar K."/>
            <person name="Dunn P."/>
            <person name="Etgu P."/>
            <person name="Feldblyum T.V."/>
            <person name="Feng J.-D."/>
            <person name="Fong B."/>
            <person name="Fujii C.Y."/>
            <person name="Gill J.E."/>
            <person name="Goldsmith A.D."/>
            <person name="Haas B."/>
            <person name="Hansen N.F."/>
            <person name="Hughes B."/>
            <person name="Huizar L."/>
            <person name="Hunter J.L."/>
            <person name="Jenkins J."/>
            <person name="Johnson-Hopson C."/>
            <person name="Khan S."/>
            <person name="Khaykin E."/>
            <person name="Kim C.J."/>
            <person name="Koo H.L."/>
            <person name="Kremenetskaia I."/>
            <person name="Kurtz D.B."/>
            <person name="Kwan A."/>
            <person name="Lam B."/>
            <person name="Langin-Hooper S."/>
            <person name="Lee A."/>
            <person name="Lee J.M."/>
            <person name="Lenz C.A."/>
            <person name="Li J.H."/>
            <person name="Li Y.-P."/>
            <person name="Lin X."/>
            <person name="Liu S.X."/>
            <person name="Liu Z.A."/>
            <person name="Luros J.S."/>
            <person name="Maiti R."/>
            <person name="Marziali A."/>
            <person name="Militscher J."/>
            <person name="Miranda M."/>
            <person name="Nguyen M."/>
            <person name="Nierman W.C."/>
            <person name="Osborne B.I."/>
            <person name="Pai G."/>
            <person name="Peterson J."/>
            <person name="Pham P.K."/>
            <person name="Rizzo M."/>
            <person name="Rooney T."/>
            <person name="Rowley D."/>
            <person name="Sakano H."/>
            <person name="Salzberg S.L."/>
            <person name="Schwartz J.R."/>
            <person name="Shinn P."/>
            <person name="Southwick A.M."/>
            <person name="Sun H."/>
            <person name="Tallon L.J."/>
            <person name="Tambunga G."/>
            <person name="Toriumi M.J."/>
            <person name="Town C.D."/>
            <person name="Utterback T."/>
            <person name="Van Aken S."/>
            <person name="Vaysberg M."/>
            <person name="Vysotskaia V.S."/>
            <person name="Walker M."/>
            <person name="Wu D."/>
            <person name="Yu G."/>
            <person name="Fraser C.M."/>
            <person name="Venter J.C."/>
            <person name="Davis R.W."/>
        </authorList>
    </citation>
    <scope>NUCLEOTIDE SEQUENCE [LARGE SCALE GENOMIC DNA]</scope>
    <source>
        <strain>cv. Columbia</strain>
    </source>
</reference>
<reference key="2">
    <citation type="journal article" date="2017" name="Plant J.">
        <title>Araport11: a complete reannotation of the Arabidopsis thaliana reference genome.</title>
        <authorList>
            <person name="Cheng C.Y."/>
            <person name="Krishnakumar V."/>
            <person name="Chan A.P."/>
            <person name="Thibaud-Nissen F."/>
            <person name="Schobel S."/>
            <person name="Town C.D."/>
        </authorList>
    </citation>
    <scope>GENOME REANNOTATION</scope>
    <source>
        <strain>cv. Columbia</strain>
    </source>
</reference>
<reference key="3">
    <citation type="journal article" date="2004" name="Genome Res.">
        <title>Whole genome sequence comparisons and 'full-length' cDNA sequences: a combined approach to evaluate and improve Arabidopsis genome annotation.</title>
        <authorList>
            <person name="Castelli V."/>
            <person name="Aury J.-M."/>
            <person name="Jaillon O."/>
            <person name="Wincker P."/>
            <person name="Clepet C."/>
            <person name="Menard M."/>
            <person name="Cruaud C."/>
            <person name="Quetier F."/>
            <person name="Scarpelli C."/>
            <person name="Schaechter V."/>
            <person name="Temple G."/>
            <person name="Caboche M."/>
            <person name="Weissenbach J."/>
            <person name="Salanoubat M."/>
        </authorList>
    </citation>
    <scope>NUCLEOTIDE SEQUENCE [LARGE SCALE MRNA]</scope>
    <source>
        <strain>cv. Columbia</strain>
    </source>
</reference>
<reference key="4">
    <citation type="journal article" date="2000" name="Plant Cell">
        <title>A new family of high-affinity transporters for adenine, cytosine, and purine derivatives in Arabidopsis.</title>
        <authorList>
            <person name="Gillissen B."/>
            <person name="Buerkle L."/>
            <person name="Andre B."/>
            <person name="Kuehn C."/>
            <person name="Rentsch D."/>
            <person name="Brandl B."/>
            <person name="Frommer W.B."/>
        </authorList>
    </citation>
    <scope>GENE FAMILY</scope>
    <scope>NOMENCLATURE</scope>
</reference>
<reference key="5">
    <citation type="journal article" date="2012" name="Mol. Cell. Proteomics">
        <title>Comparative large-scale characterisation of plant vs. mammal proteins reveals similar and idiosyncratic N-alpha acetylation features.</title>
        <authorList>
            <person name="Bienvenut W.V."/>
            <person name="Sumpton D."/>
            <person name="Martinez A."/>
            <person name="Lilla S."/>
            <person name="Espagne C."/>
            <person name="Meinnel T."/>
            <person name="Giglione C."/>
        </authorList>
    </citation>
    <scope>ACETYLATION [LARGE SCALE ANALYSIS] AT ALA-2</scope>
    <scope>CLEAVAGE OF INITIATOR METHIONINE [LARGE SCALE ANALYSIS]</scope>
    <scope>IDENTIFICATION BY MASS SPECTROMETRY [LARGE SCALE ANALYSIS]</scope>
</reference>
<reference key="6">
    <citation type="journal article" date="2016" name="Science">
        <title>Plant development regulated by cytokinin sinks.</title>
        <authorList>
            <person name="Zuercher E."/>
            <person name="Liu J."/>
            <person name="di Donato M."/>
            <person name="Geisler M."/>
            <person name="Mueller B."/>
        </authorList>
    </citation>
    <scope>FUNCTION</scope>
    <scope>TISSUE SPECIFICITY</scope>
    <scope>SUBCELLULAR LOCATION</scope>
</reference>
<evidence type="ECO:0000255" key="1"/>
<evidence type="ECO:0000269" key="2">
    <source>
    </source>
</evidence>
<evidence type="ECO:0000303" key="3">
    <source>
    </source>
</evidence>
<evidence type="ECO:0000305" key="4"/>
<evidence type="ECO:0000312" key="5">
    <source>
        <dbReference type="Araport" id="AT1G19770"/>
    </source>
</evidence>
<evidence type="ECO:0000312" key="6">
    <source>
        <dbReference type="EMBL" id="AAG12553.1"/>
    </source>
</evidence>
<evidence type="ECO:0007744" key="7">
    <source>
    </source>
</evidence>
<proteinExistence type="evidence at protein level"/>
<keyword id="KW-0007">Acetylation</keyword>
<keyword id="KW-1003">Cell membrane</keyword>
<keyword id="KW-0932">Cytokinin signaling pathway</keyword>
<keyword id="KW-0472">Membrane</keyword>
<keyword id="KW-1185">Reference proteome</keyword>
<keyword id="KW-0812">Transmembrane</keyword>
<keyword id="KW-1133">Transmembrane helix</keyword>
<keyword id="KW-0813">Transport</keyword>